<name>MSHD_RENSM</name>
<gene>
    <name evidence="1" type="primary">mshD</name>
    <name type="ordered locus">RSal33209_0966</name>
</gene>
<proteinExistence type="inferred from homology"/>
<dbReference type="EC" id="2.3.1.189" evidence="1"/>
<dbReference type="EMBL" id="CP000910">
    <property type="protein sequence ID" value="ABY22707.1"/>
    <property type="molecule type" value="Genomic_DNA"/>
</dbReference>
<dbReference type="RefSeq" id="WP_012244402.1">
    <property type="nucleotide sequence ID" value="NC_010168.1"/>
</dbReference>
<dbReference type="SMR" id="A9WNI5"/>
<dbReference type="STRING" id="288705.RSal33209_0966"/>
<dbReference type="KEGG" id="rsa:RSal33209_0966"/>
<dbReference type="eggNOG" id="COG0456">
    <property type="taxonomic scope" value="Bacteria"/>
</dbReference>
<dbReference type="HOGENOM" id="CLU_068014_0_0_11"/>
<dbReference type="Proteomes" id="UP000002007">
    <property type="component" value="Chromosome"/>
</dbReference>
<dbReference type="GO" id="GO:0035447">
    <property type="term" value="F:mycothiol synthase activity"/>
    <property type="evidence" value="ECO:0007669"/>
    <property type="project" value="UniProtKB-UniRule"/>
</dbReference>
<dbReference type="GO" id="GO:0008999">
    <property type="term" value="F:protein-N-terminal-alanine acetyltransferase activity"/>
    <property type="evidence" value="ECO:0007669"/>
    <property type="project" value="TreeGrafter"/>
</dbReference>
<dbReference type="GO" id="GO:0010125">
    <property type="term" value="P:mycothiol biosynthetic process"/>
    <property type="evidence" value="ECO:0007669"/>
    <property type="project" value="UniProtKB-UniRule"/>
</dbReference>
<dbReference type="CDD" id="cd04301">
    <property type="entry name" value="NAT_SF"/>
    <property type="match status" value="2"/>
</dbReference>
<dbReference type="Gene3D" id="3.40.630.30">
    <property type="match status" value="1"/>
</dbReference>
<dbReference type="HAMAP" id="MF_01698">
    <property type="entry name" value="MshD"/>
    <property type="match status" value="1"/>
</dbReference>
<dbReference type="InterPro" id="IPR016181">
    <property type="entry name" value="Acyl_CoA_acyltransferase"/>
</dbReference>
<dbReference type="InterPro" id="IPR000182">
    <property type="entry name" value="GNAT_dom"/>
</dbReference>
<dbReference type="InterPro" id="IPR050276">
    <property type="entry name" value="MshD_Acetyltransferase"/>
</dbReference>
<dbReference type="InterPro" id="IPR017813">
    <property type="entry name" value="Mycothiol_AcTrfase"/>
</dbReference>
<dbReference type="NCBIfam" id="TIGR03448">
    <property type="entry name" value="mycothiol_MshD"/>
    <property type="match status" value="1"/>
</dbReference>
<dbReference type="PANTHER" id="PTHR43617">
    <property type="entry name" value="L-AMINO ACID N-ACETYLTRANSFERASE"/>
    <property type="match status" value="1"/>
</dbReference>
<dbReference type="PANTHER" id="PTHR43617:SF31">
    <property type="entry name" value="MYCOTHIOL ACETYLTRANSFERASE"/>
    <property type="match status" value="1"/>
</dbReference>
<dbReference type="Pfam" id="PF00583">
    <property type="entry name" value="Acetyltransf_1"/>
    <property type="match status" value="1"/>
</dbReference>
<dbReference type="Pfam" id="PF13508">
    <property type="entry name" value="Acetyltransf_7"/>
    <property type="match status" value="1"/>
</dbReference>
<dbReference type="PIRSF" id="PIRSF021524">
    <property type="entry name" value="MSH_acetyltransferase"/>
    <property type="match status" value="1"/>
</dbReference>
<dbReference type="SUPFAM" id="SSF55729">
    <property type="entry name" value="Acyl-CoA N-acyltransferases (Nat)"/>
    <property type="match status" value="1"/>
</dbReference>
<dbReference type="PROSITE" id="PS51186">
    <property type="entry name" value="GNAT"/>
    <property type="match status" value="2"/>
</dbReference>
<sequence length="338" mass="36273">MTTGPATPPQTNHAEDRTEWPIQVLRAAPETYLLQEILKLAEVAIDTDGHPPFSDQTLIQLRSANAPLLILLSYVPAAPEVPAALAGVAVVLEHDGQPASGTLELVVHPTYRNQGVGQVLLKSLQSARGFESLNAWSHGSHAAAQQLADQFGFEAVRALRRLRLALDAGHQLPAASLPTNISLRSFVPDQDEAAWLAVNAAAFAHHPEQGETSLADLKSLMEEQWFDAAGFLLAVDETDQIMGFHWTKIHAAPAGHQAIGEVYVVGIAPAAQGKGLGKALTLAGIDYLQKKGLSSIMLYVDADNTAAVSLYQSLGFARWDADTMYSYPSATNSNNKFQ</sequence>
<protein>
    <recommendedName>
        <fullName evidence="1">Mycothiol acetyltransferase</fullName>
        <shortName evidence="1">MSH acetyltransferase</shortName>
        <ecNumber evidence="1">2.3.1.189</ecNumber>
    </recommendedName>
    <alternativeName>
        <fullName evidence="1">Mycothiol synthase</fullName>
    </alternativeName>
</protein>
<keyword id="KW-0012">Acyltransferase</keyword>
<keyword id="KW-1185">Reference proteome</keyword>
<keyword id="KW-0677">Repeat</keyword>
<keyword id="KW-0808">Transferase</keyword>
<evidence type="ECO:0000255" key="1">
    <source>
        <dbReference type="HAMAP-Rule" id="MF_01698"/>
    </source>
</evidence>
<reference key="1">
    <citation type="journal article" date="2008" name="J. Bacteriol.">
        <title>Genome sequence of the fish pathogen Renibacterium salmoninarum suggests reductive evolution away from an environmental Arthrobacter ancestor.</title>
        <authorList>
            <person name="Wiens G.D."/>
            <person name="Rockey D.D."/>
            <person name="Wu Z."/>
            <person name="Chang J."/>
            <person name="Levy R."/>
            <person name="Crane S."/>
            <person name="Chen D.S."/>
            <person name="Capri G.R."/>
            <person name="Burnett J.R."/>
            <person name="Sudheesh P.S."/>
            <person name="Schipma M.J."/>
            <person name="Burd H."/>
            <person name="Bhattacharyya A."/>
            <person name="Rhodes L.D."/>
            <person name="Kaul R."/>
            <person name="Strom M.S."/>
        </authorList>
    </citation>
    <scope>NUCLEOTIDE SEQUENCE [LARGE SCALE GENOMIC DNA]</scope>
    <source>
        <strain>ATCC 33209 / DSM 20767 / JCM 11484 / NBRC 15589 / NCIMB 2235</strain>
    </source>
</reference>
<comment type="function">
    <text evidence="1">Catalyzes the transfer of acetyl from acetyl-CoA to desacetylmycothiol (Cys-GlcN-Ins) to form mycothiol.</text>
</comment>
<comment type="catalytic activity">
    <reaction evidence="1">
        <text>1D-myo-inositol 2-(L-cysteinylamino)-2-deoxy-alpha-D-glucopyranoside + acetyl-CoA = mycothiol + CoA + H(+)</text>
        <dbReference type="Rhea" id="RHEA:26172"/>
        <dbReference type="ChEBI" id="CHEBI:15378"/>
        <dbReference type="ChEBI" id="CHEBI:16768"/>
        <dbReference type="ChEBI" id="CHEBI:57287"/>
        <dbReference type="ChEBI" id="CHEBI:57288"/>
        <dbReference type="ChEBI" id="CHEBI:58887"/>
        <dbReference type="EC" id="2.3.1.189"/>
    </reaction>
</comment>
<comment type="subunit">
    <text evidence="1">Monomer.</text>
</comment>
<comment type="similarity">
    <text evidence="1">Belongs to the acetyltransferase family. MshD subfamily.</text>
</comment>
<feature type="chain" id="PRO_0000400289" description="Mycothiol acetyltransferase">
    <location>
        <begin position="1"/>
        <end position="338"/>
    </location>
</feature>
<feature type="domain" description="N-acetyltransferase 1" evidence="1">
    <location>
        <begin position="29"/>
        <end position="173"/>
    </location>
</feature>
<feature type="domain" description="N-acetyltransferase 2" evidence="1">
    <location>
        <begin position="181"/>
        <end position="338"/>
    </location>
</feature>
<feature type="binding site" evidence="1">
    <location>
        <position position="55"/>
    </location>
    <ligand>
        <name>1D-myo-inositol 2-(L-cysteinylamino)-2-deoxy-alpha-D-glucopyranoside</name>
        <dbReference type="ChEBI" id="CHEBI:58887"/>
    </ligand>
</feature>
<feature type="binding site" evidence="1">
    <location>
        <begin position="105"/>
        <end position="107"/>
    </location>
    <ligand>
        <name>acetyl-CoA</name>
        <dbReference type="ChEBI" id="CHEBI:57288"/>
        <label>1</label>
    </ligand>
</feature>
<feature type="binding site" evidence="1">
    <location>
        <position position="208"/>
    </location>
    <ligand>
        <name>1D-myo-inositol 2-(L-cysteinylamino)-2-deoxy-alpha-D-glucopyranoside</name>
        <dbReference type="ChEBI" id="CHEBI:58887"/>
    </ligand>
</feature>
<feature type="binding site" evidence="1">
    <location>
        <position position="248"/>
    </location>
    <ligand>
        <name>1D-myo-inositol 2-(L-cysteinylamino)-2-deoxy-alpha-D-glucopyranoside</name>
        <dbReference type="ChEBI" id="CHEBI:58887"/>
    </ligand>
</feature>
<feature type="binding site" evidence="1">
    <location>
        <position position="261"/>
    </location>
    <ligand>
        <name>1D-myo-inositol 2-(L-cysteinylamino)-2-deoxy-alpha-D-glucopyranoside</name>
        <dbReference type="ChEBI" id="CHEBI:58887"/>
    </ligand>
</feature>
<feature type="binding site" evidence="1">
    <location>
        <begin position="265"/>
        <end position="267"/>
    </location>
    <ligand>
        <name>acetyl-CoA</name>
        <dbReference type="ChEBI" id="CHEBI:57288"/>
        <label>2</label>
    </ligand>
</feature>
<feature type="binding site" evidence="1">
    <location>
        <begin position="272"/>
        <end position="278"/>
    </location>
    <ligand>
        <name>acetyl-CoA</name>
        <dbReference type="ChEBI" id="CHEBI:57288"/>
        <label>2</label>
    </ligand>
</feature>
<feature type="binding site" evidence="1">
    <location>
        <position position="299"/>
    </location>
    <ligand>
        <name>1D-myo-inositol 2-(L-cysteinylamino)-2-deoxy-alpha-D-glucopyranoside</name>
        <dbReference type="ChEBI" id="CHEBI:58887"/>
    </ligand>
</feature>
<organism>
    <name type="scientific">Renibacterium salmoninarum (strain ATCC 33209 / DSM 20767 / JCM 11484 / NBRC 15589 / NCIMB 2235)</name>
    <dbReference type="NCBI Taxonomy" id="288705"/>
    <lineage>
        <taxon>Bacteria</taxon>
        <taxon>Bacillati</taxon>
        <taxon>Actinomycetota</taxon>
        <taxon>Actinomycetes</taxon>
        <taxon>Micrococcales</taxon>
        <taxon>Micrococcaceae</taxon>
        <taxon>Renibacterium</taxon>
    </lineage>
</organism>
<accession>A9WNI5</accession>